<evidence type="ECO:0000255" key="1">
    <source>
        <dbReference type="HAMAP-Rule" id="MF_01325"/>
    </source>
</evidence>
<evidence type="ECO:0000256" key="2">
    <source>
        <dbReference type="SAM" id="MobiDB-lite"/>
    </source>
</evidence>
<evidence type="ECO:0000305" key="3"/>
<protein>
    <recommendedName>
        <fullName evidence="1">Large ribosomal subunit protein uL3</fullName>
    </recommendedName>
    <alternativeName>
        <fullName evidence="3">50S ribosomal protein L3</fullName>
    </alternativeName>
</protein>
<name>RL3_LACH4</name>
<accession>A8YXK5</accession>
<organism>
    <name type="scientific">Lactobacillus helveticus (strain DPC 4571)</name>
    <dbReference type="NCBI Taxonomy" id="405566"/>
    <lineage>
        <taxon>Bacteria</taxon>
        <taxon>Bacillati</taxon>
        <taxon>Bacillota</taxon>
        <taxon>Bacilli</taxon>
        <taxon>Lactobacillales</taxon>
        <taxon>Lactobacillaceae</taxon>
        <taxon>Lactobacillus</taxon>
    </lineage>
</organism>
<dbReference type="EMBL" id="CP000517">
    <property type="protein sequence ID" value="ABX26536.1"/>
    <property type="molecule type" value="Genomic_DNA"/>
</dbReference>
<dbReference type="RefSeq" id="WP_003625776.1">
    <property type="nucleotide sequence ID" value="NC_010080.1"/>
</dbReference>
<dbReference type="SMR" id="A8YXK5"/>
<dbReference type="GeneID" id="83725547"/>
<dbReference type="KEGG" id="lhe:lhv_0312"/>
<dbReference type="eggNOG" id="COG0087">
    <property type="taxonomic scope" value="Bacteria"/>
</dbReference>
<dbReference type="HOGENOM" id="CLU_044142_4_1_9"/>
<dbReference type="Proteomes" id="UP000000790">
    <property type="component" value="Chromosome"/>
</dbReference>
<dbReference type="GO" id="GO:0022625">
    <property type="term" value="C:cytosolic large ribosomal subunit"/>
    <property type="evidence" value="ECO:0007669"/>
    <property type="project" value="TreeGrafter"/>
</dbReference>
<dbReference type="GO" id="GO:0019843">
    <property type="term" value="F:rRNA binding"/>
    <property type="evidence" value="ECO:0007669"/>
    <property type="project" value="UniProtKB-UniRule"/>
</dbReference>
<dbReference type="GO" id="GO:0003735">
    <property type="term" value="F:structural constituent of ribosome"/>
    <property type="evidence" value="ECO:0007669"/>
    <property type="project" value="InterPro"/>
</dbReference>
<dbReference type="GO" id="GO:0006412">
    <property type="term" value="P:translation"/>
    <property type="evidence" value="ECO:0007669"/>
    <property type="project" value="UniProtKB-UniRule"/>
</dbReference>
<dbReference type="FunFam" id="2.40.30.10:FF:000004">
    <property type="entry name" value="50S ribosomal protein L3"/>
    <property type="match status" value="1"/>
</dbReference>
<dbReference type="FunFam" id="3.30.160.810:FF:000002">
    <property type="entry name" value="50S ribosomal protein L3"/>
    <property type="match status" value="1"/>
</dbReference>
<dbReference type="Gene3D" id="3.30.160.810">
    <property type="match status" value="1"/>
</dbReference>
<dbReference type="Gene3D" id="2.40.30.10">
    <property type="entry name" value="Translation factors"/>
    <property type="match status" value="1"/>
</dbReference>
<dbReference type="HAMAP" id="MF_01325_B">
    <property type="entry name" value="Ribosomal_uL3_B"/>
    <property type="match status" value="1"/>
</dbReference>
<dbReference type="InterPro" id="IPR000597">
    <property type="entry name" value="Ribosomal_uL3"/>
</dbReference>
<dbReference type="InterPro" id="IPR019927">
    <property type="entry name" value="Ribosomal_uL3_bac/org-type"/>
</dbReference>
<dbReference type="InterPro" id="IPR019926">
    <property type="entry name" value="Ribosomal_uL3_CS"/>
</dbReference>
<dbReference type="InterPro" id="IPR009000">
    <property type="entry name" value="Transl_B-barrel_sf"/>
</dbReference>
<dbReference type="NCBIfam" id="TIGR03625">
    <property type="entry name" value="L3_bact"/>
    <property type="match status" value="1"/>
</dbReference>
<dbReference type="PANTHER" id="PTHR11229">
    <property type="entry name" value="50S RIBOSOMAL PROTEIN L3"/>
    <property type="match status" value="1"/>
</dbReference>
<dbReference type="PANTHER" id="PTHR11229:SF16">
    <property type="entry name" value="LARGE RIBOSOMAL SUBUNIT PROTEIN UL3C"/>
    <property type="match status" value="1"/>
</dbReference>
<dbReference type="Pfam" id="PF00297">
    <property type="entry name" value="Ribosomal_L3"/>
    <property type="match status" value="1"/>
</dbReference>
<dbReference type="SUPFAM" id="SSF50447">
    <property type="entry name" value="Translation proteins"/>
    <property type="match status" value="1"/>
</dbReference>
<dbReference type="PROSITE" id="PS00474">
    <property type="entry name" value="RIBOSOMAL_L3"/>
    <property type="match status" value="1"/>
</dbReference>
<gene>
    <name evidence="1" type="primary">rplC</name>
    <name type="ordered locus">lhv_0312</name>
</gene>
<feature type="chain" id="PRO_1000073251" description="Large ribosomal subunit protein uL3">
    <location>
        <begin position="1"/>
        <end position="212"/>
    </location>
</feature>
<feature type="region of interest" description="Disordered" evidence="2">
    <location>
        <begin position="119"/>
        <end position="146"/>
    </location>
</feature>
<proteinExistence type="inferred from homology"/>
<comment type="function">
    <text evidence="1">One of the primary rRNA binding proteins, it binds directly near the 3'-end of the 23S rRNA, where it nucleates assembly of the 50S subunit.</text>
</comment>
<comment type="subunit">
    <text evidence="1">Part of the 50S ribosomal subunit. Forms a cluster with proteins L14 and L19.</text>
</comment>
<comment type="similarity">
    <text evidence="1">Belongs to the universal ribosomal protein uL3 family.</text>
</comment>
<keyword id="KW-0687">Ribonucleoprotein</keyword>
<keyword id="KW-0689">Ribosomal protein</keyword>
<keyword id="KW-0694">RNA-binding</keyword>
<keyword id="KW-0699">rRNA-binding</keyword>
<sequence>MTKGILGRKVGMTQIFTKDGVLVPVTVVEATPNVVMQVKTVESDGYEAVQLGYQDKREVLSNKPEKGHADKAKTSPKRFIREIRGVELKDYEVGSEVTVDTFKEGDVVNVTGTSRGHGYQGNIKRWGQSRGPETHGSRYHRIPGSMGSIINRVPKGKRLPGHMGMKKVTIENLVIEKVVADKNVLMIKGNVPGAKNSLIVVKTASKAVKADK</sequence>
<reference key="1">
    <citation type="journal article" date="2008" name="J. Bacteriol.">
        <title>Genome sequence of Lactobacillus helveticus: an organism distinguished by selective gene loss and IS element expansion.</title>
        <authorList>
            <person name="Callanan M."/>
            <person name="Kaleta P."/>
            <person name="O'Callaghan J."/>
            <person name="O'Sullivan O."/>
            <person name="Jordan K."/>
            <person name="McAuliffe O."/>
            <person name="Sangrador-Vegas A."/>
            <person name="Slattery L."/>
            <person name="Fitzgerald G.F."/>
            <person name="Beresford T."/>
            <person name="Ross R.P."/>
        </authorList>
    </citation>
    <scope>NUCLEOTIDE SEQUENCE [LARGE SCALE GENOMIC DNA]</scope>
    <source>
        <strain>DPC 4571</strain>
    </source>
</reference>